<feature type="chain" id="PRO_1000085474" description="Probable succinate transporter subunit YjjB">
    <location>
        <begin position="1"/>
        <end position="157"/>
    </location>
</feature>
<feature type="transmembrane region" description="Helical" evidence="1">
    <location>
        <begin position="8"/>
        <end position="28"/>
    </location>
</feature>
<feature type="transmembrane region" description="Helical" evidence="1">
    <location>
        <begin position="55"/>
        <end position="75"/>
    </location>
</feature>
<feature type="transmembrane region" description="Helical" evidence="1">
    <location>
        <begin position="87"/>
        <end position="107"/>
    </location>
</feature>
<feature type="transmembrane region" description="Helical" evidence="1">
    <location>
        <begin position="129"/>
        <end position="149"/>
    </location>
</feature>
<gene>
    <name evidence="1" type="primary">yjjB</name>
    <name type="ordered locus">SPAB_05719</name>
</gene>
<accession>A9N7B4</accession>
<evidence type="ECO:0000255" key="1">
    <source>
        <dbReference type="HAMAP-Rule" id="MF_01191"/>
    </source>
</evidence>
<sequence>MGIIDFLLALMQDMILSAIPAVGFAMVFNVPHRALPWCALLGALGHGSRMLMMSAGFNIEWSTFMASLLVGSIGIQWSRWYLAHPKVFTVAAVIPMFPGISAYTAMISAVKISHLGYSEPMMITLLTNFLKASSIVGALSIGLSVPGLWLYRKRPRV</sequence>
<keyword id="KW-0997">Cell inner membrane</keyword>
<keyword id="KW-1003">Cell membrane</keyword>
<keyword id="KW-0472">Membrane</keyword>
<keyword id="KW-0812">Transmembrane</keyword>
<keyword id="KW-1133">Transmembrane helix</keyword>
<keyword id="KW-0813">Transport</keyword>
<organism>
    <name type="scientific">Salmonella paratyphi B (strain ATCC BAA-1250 / SPB7)</name>
    <dbReference type="NCBI Taxonomy" id="1016998"/>
    <lineage>
        <taxon>Bacteria</taxon>
        <taxon>Pseudomonadati</taxon>
        <taxon>Pseudomonadota</taxon>
        <taxon>Gammaproteobacteria</taxon>
        <taxon>Enterobacterales</taxon>
        <taxon>Enterobacteriaceae</taxon>
        <taxon>Salmonella</taxon>
    </lineage>
</organism>
<comment type="function">
    <text evidence="1">Involved in succinate export with YjjP. Both proteins are required for export.</text>
</comment>
<comment type="subunit">
    <text evidence="1">The transporter is composed of YjjB and YjjP.</text>
</comment>
<comment type="subcellular location">
    <subcellularLocation>
        <location evidence="1">Cell inner membrane</location>
        <topology evidence="1">Multi-pass membrane protein</topology>
    </subcellularLocation>
</comment>
<comment type="similarity">
    <text evidence="1">Belongs to the ThrE exporter (TC 2.A.79) family.</text>
</comment>
<proteinExistence type="inferred from homology"/>
<name>YJJB_SALPB</name>
<protein>
    <recommendedName>
        <fullName evidence="1">Probable succinate transporter subunit YjjB</fullName>
    </recommendedName>
</protein>
<reference key="1">
    <citation type="submission" date="2007-11" db="EMBL/GenBank/DDBJ databases">
        <authorList>
            <consortium name="The Salmonella enterica serovar Paratyphi B Genome Sequencing Project"/>
            <person name="McClelland M."/>
            <person name="Sanderson E.K."/>
            <person name="Porwollik S."/>
            <person name="Spieth J."/>
            <person name="Clifton W.S."/>
            <person name="Fulton R."/>
            <person name="Cordes M."/>
            <person name="Wollam A."/>
            <person name="Shah N."/>
            <person name="Pepin K."/>
            <person name="Bhonagiri V."/>
            <person name="Nash W."/>
            <person name="Johnson M."/>
            <person name="Thiruvilangam P."/>
            <person name="Wilson R."/>
        </authorList>
    </citation>
    <scope>NUCLEOTIDE SEQUENCE [LARGE SCALE GENOMIC DNA]</scope>
    <source>
        <strain>ATCC BAA-1250 / SPB7</strain>
    </source>
</reference>
<dbReference type="EMBL" id="CP000886">
    <property type="protein sequence ID" value="ABX70987.1"/>
    <property type="molecule type" value="Genomic_DNA"/>
</dbReference>
<dbReference type="RefSeq" id="WP_000511329.1">
    <property type="nucleotide sequence ID" value="NC_010102.1"/>
</dbReference>
<dbReference type="KEGG" id="spq:SPAB_05719"/>
<dbReference type="PATRIC" id="fig|1016998.12.peg.5362"/>
<dbReference type="HOGENOM" id="CLU_117642_1_0_6"/>
<dbReference type="BioCyc" id="SENT1016998:SPAB_RS23340-MONOMER"/>
<dbReference type="Proteomes" id="UP000008556">
    <property type="component" value="Chromosome"/>
</dbReference>
<dbReference type="GO" id="GO:0005886">
    <property type="term" value="C:plasma membrane"/>
    <property type="evidence" value="ECO:0007669"/>
    <property type="project" value="UniProtKB-SubCell"/>
</dbReference>
<dbReference type="GO" id="GO:0015744">
    <property type="term" value="P:succinate transport"/>
    <property type="evidence" value="ECO:0007669"/>
    <property type="project" value="UniProtKB-UniRule"/>
</dbReference>
<dbReference type="HAMAP" id="MF_01191">
    <property type="entry name" value="YjjB"/>
    <property type="match status" value="1"/>
</dbReference>
<dbReference type="InterPro" id="IPR024528">
    <property type="entry name" value="ThrE_2"/>
</dbReference>
<dbReference type="InterPro" id="IPR050539">
    <property type="entry name" value="ThrE_Dicarb/AminoAcid_Exp"/>
</dbReference>
<dbReference type="InterPro" id="IPR020914">
    <property type="entry name" value="YjjB"/>
</dbReference>
<dbReference type="NCBIfam" id="NF007391">
    <property type="entry name" value="PRK09917.1"/>
    <property type="match status" value="1"/>
</dbReference>
<dbReference type="PANTHER" id="PTHR34390:SF1">
    <property type="entry name" value="SUCCINATE TRANSPORTER SUBUNIT YJJB-RELATED"/>
    <property type="match status" value="1"/>
</dbReference>
<dbReference type="PANTHER" id="PTHR34390">
    <property type="entry name" value="UPF0442 PROTEIN YJJB-RELATED"/>
    <property type="match status" value="1"/>
</dbReference>
<dbReference type="Pfam" id="PF12821">
    <property type="entry name" value="ThrE_2"/>
    <property type="match status" value="1"/>
</dbReference>